<organism>
    <name type="scientific">Pseudomonas putida (strain W619)</name>
    <dbReference type="NCBI Taxonomy" id="390235"/>
    <lineage>
        <taxon>Bacteria</taxon>
        <taxon>Pseudomonadati</taxon>
        <taxon>Pseudomonadota</taxon>
        <taxon>Gammaproteobacteria</taxon>
        <taxon>Pseudomonadales</taxon>
        <taxon>Pseudomonadaceae</taxon>
        <taxon>Pseudomonas</taxon>
    </lineage>
</organism>
<proteinExistence type="inferred from homology"/>
<sequence>MALDIHAHRILILDFGSQYTQLIARRVREIGVYCELHPFDMDDEAIREFNPRGIILAGGPESVHEANSPRAPQAVFDLNVPLLGICYGMQTMAEQLGGKVEGSDLREFGYARVDVVGKSRLLDGIEDHVDGDGVLGLDVWMSHGDKVTQMPGNFNILASTPSCPIAGMFDDARGYYGVQFHPEVTHTKQGGRILSRFVQDICGCEALWTPSNIVEDAIAQVRQQVGSANVLLGLSGGVDSSVVAALLHRAIGDQLTCVFVDNGLLRLHEGDQVMAMFKENMGVKVIRADAEKQFLDNLEGEADPEKKRKIIGRTFIDVFDAEASKLDNIQFLAQGTIYPDVIESAGAKSGKAHVIKSHHNVGGLPEEMNLKLVEPLRELFKDEVRKIGLELGLPYDMVYRHPFPGPGLGVRILGEVKKEYADILRRADHIFIEELRKADWYHKTSQAFVVFQPVKSVGVVGDGRRYAWVVALRAVETVDFMTARWAHLPYDLLETVSGRIINEIDGISRVTYDVSSKPPATIEWE</sequence>
<dbReference type="EC" id="6.3.5.2" evidence="1"/>
<dbReference type="EMBL" id="CP000949">
    <property type="protein sequence ID" value="ACA74673.1"/>
    <property type="molecule type" value="Genomic_DNA"/>
</dbReference>
<dbReference type="SMR" id="B1JDH6"/>
<dbReference type="STRING" id="390235.PputW619_4193"/>
<dbReference type="KEGG" id="ppw:PputW619_4193"/>
<dbReference type="eggNOG" id="COG0518">
    <property type="taxonomic scope" value="Bacteria"/>
</dbReference>
<dbReference type="eggNOG" id="COG0519">
    <property type="taxonomic scope" value="Bacteria"/>
</dbReference>
<dbReference type="HOGENOM" id="CLU_014340_0_5_6"/>
<dbReference type="OrthoDB" id="9802219at2"/>
<dbReference type="UniPathway" id="UPA00189">
    <property type="reaction ID" value="UER00296"/>
</dbReference>
<dbReference type="GO" id="GO:0005829">
    <property type="term" value="C:cytosol"/>
    <property type="evidence" value="ECO:0007669"/>
    <property type="project" value="TreeGrafter"/>
</dbReference>
<dbReference type="GO" id="GO:0005524">
    <property type="term" value="F:ATP binding"/>
    <property type="evidence" value="ECO:0007669"/>
    <property type="project" value="UniProtKB-UniRule"/>
</dbReference>
<dbReference type="GO" id="GO:0003921">
    <property type="term" value="F:GMP synthase activity"/>
    <property type="evidence" value="ECO:0007669"/>
    <property type="project" value="InterPro"/>
</dbReference>
<dbReference type="CDD" id="cd01742">
    <property type="entry name" value="GATase1_GMP_Synthase"/>
    <property type="match status" value="1"/>
</dbReference>
<dbReference type="CDD" id="cd01997">
    <property type="entry name" value="GMP_synthase_C"/>
    <property type="match status" value="1"/>
</dbReference>
<dbReference type="FunFam" id="3.30.300.10:FF:000002">
    <property type="entry name" value="GMP synthase [glutamine-hydrolyzing]"/>
    <property type="match status" value="1"/>
</dbReference>
<dbReference type="FunFam" id="3.40.50.620:FF:000001">
    <property type="entry name" value="GMP synthase [glutamine-hydrolyzing]"/>
    <property type="match status" value="1"/>
</dbReference>
<dbReference type="FunFam" id="3.40.50.880:FF:000001">
    <property type="entry name" value="GMP synthase [glutamine-hydrolyzing]"/>
    <property type="match status" value="1"/>
</dbReference>
<dbReference type="Gene3D" id="3.30.300.10">
    <property type="match status" value="1"/>
</dbReference>
<dbReference type="Gene3D" id="3.40.50.880">
    <property type="match status" value="1"/>
</dbReference>
<dbReference type="Gene3D" id="3.40.50.620">
    <property type="entry name" value="HUPs"/>
    <property type="match status" value="1"/>
</dbReference>
<dbReference type="HAMAP" id="MF_00344">
    <property type="entry name" value="GMP_synthase"/>
    <property type="match status" value="1"/>
</dbReference>
<dbReference type="InterPro" id="IPR029062">
    <property type="entry name" value="Class_I_gatase-like"/>
</dbReference>
<dbReference type="InterPro" id="IPR017926">
    <property type="entry name" value="GATASE"/>
</dbReference>
<dbReference type="InterPro" id="IPR001674">
    <property type="entry name" value="GMP_synth_C"/>
</dbReference>
<dbReference type="InterPro" id="IPR004739">
    <property type="entry name" value="GMP_synth_GATase"/>
</dbReference>
<dbReference type="InterPro" id="IPR022955">
    <property type="entry name" value="GMP_synthase"/>
</dbReference>
<dbReference type="InterPro" id="IPR025777">
    <property type="entry name" value="GMPS_ATP_PPase_dom"/>
</dbReference>
<dbReference type="InterPro" id="IPR022310">
    <property type="entry name" value="NAD/GMP_synthase"/>
</dbReference>
<dbReference type="InterPro" id="IPR014729">
    <property type="entry name" value="Rossmann-like_a/b/a_fold"/>
</dbReference>
<dbReference type="NCBIfam" id="TIGR00884">
    <property type="entry name" value="guaA_Cterm"/>
    <property type="match status" value="1"/>
</dbReference>
<dbReference type="NCBIfam" id="TIGR00888">
    <property type="entry name" value="guaA_Nterm"/>
    <property type="match status" value="1"/>
</dbReference>
<dbReference type="NCBIfam" id="NF000848">
    <property type="entry name" value="PRK00074.1"/>
    <property type="match status" value="1"/>
</dbReference>
<dbReference type="PANTHER" id="PTHR11922:SF2">
    <property type="entry name" value="GMP SYNTHASE [GLUTAMINE-HYDROLYZING]"/>
    <property type="match status" value="1"/>
</dbReference>
<dbReference type="PANTHER" id="PTHR11922">
    <property type="entry name" value="GMP SYNTHASE-RELATED"/>
    <property type="match status" value="1"/>
</dbReference>
<dbReference type="Pfam" id="PF00117">
    <property type="entry name" value="GATase"/>
    <property type="match status" value="1"/>
</dbReference>
<dbReference type="Pfam" id="PF00958">
    <property type="entry name" value="GMP_synt_C"/>
    <property type="match status" value="1"/>
</dbReference>
<dbReference type="Pfam" id="PF02540">
    <property type="entry name" value="NAD_synthase"/>
    <property type="match status" value="1"/>
</dbReference>
<dbReference type="PRINTS" id="PR00097">
    <property type="entry name" value="ANTSNTHASEII"/>
</dbReference>
<dbReference type="PRINTS" id="PR00096">
    <property type="entry name" value="GATASE"/>
</dbReference>
<dbReference type="SUPFAM" id="SSF52402">
    <property type="entry name" value="Adenine nucleotide alpha hydrolases-like"/>
    <property type="match status" value="1"/>
</dbReference>
<dbReference type="SUPFAM" id="SSF52317">
    <property type="entry name" value="Class I glutamine amidotransferase-like"/>
    <property type="match status" value="1"/>
</dbReference>
<dbReference type="SUPFAM" id="SSF54810">
    <property type="entry name" value="GMP synthetase C-terminal dimerisation domain"/>
    <property type="match status" value="1"/>
</dbReference>
<dbReference type="PROSITE" id="PS51273">
    <property type="entry name" value="GATASE_TYPE_1"/>
    <property type="match status" value="1"/>
</dbReference>
<dbReference type="PROSITE" id="PS51553">
    <property type="entry name" value="GMPS_ATP_PPASE"/>
    <property type="match status" value="1"/>
</dbReference>
<protein>
    <recommendedName>
        <fullName evidence="1">GMP synthase [glutamine-hydrolyzing]</fullName>
        <ecNumber evidence="1">6.3.5.2</ecNumber>
    </recommendedName>
    <alternativeName>
        <fullName evidence="1">GMP synthetase</fullName>
    </alternativeName>
    <alternativeName>
        <fullName evidence="1">Glutamine amidotransferase</fullName>
    </alternativeName>
</protein>
<name>GUAA_PSEPW</name>
<feature type="chain" id="PRO_1000120372" description="GMP synthase [glutamine-hydrolyzing]">
    <location>
        <begin position="1"/>
        <end position="525"/>
    </location>
</feature>
<feature type="domain" description="Glutamine amidotransferase type-1" evidence="1">
    <location>
        <begin position="9"/>
        <end position="207"/>
    </location>
</feature>
<feature type="domain" description="GMPS ATP-PPase" evidence="1">
    <location>
        <begin position="208"/>
        <end position="400"/>
    </location>
</feature>
<feature type="active site" description="Nucleophile" evidence="1">
    <location>
        <position position="86"/>
    </location>
</feature>
<feature type="active site" evidence="1">
    <location>
        <position position="181"/>
    </location>
</feature>
<feature type="active site" evidence="1">
    <location>
        <position position="183"/>
    </location>
</feature>
<feature type="binding site" evidence="1">
    <location>
        <begin position="235"/>
        <end position="241"/>
    </location>
    <ligand>
        <name>ATP</name>
        <dbReference type="ChEBI" id="CHEBI:30616"/>
    </ligand>
</feature>
<gene>
    <name evidence="1" type="primary">guaA</name>
    <name type="ordered locus">PputW619_4193</name>
</gene>
<evidence type="ECO:0000255" key="1">
    <source>
        <dbReference type="HAMAP-Rule" id="MF_00344"/>
    </source>
</evidence>
<reference key="1">
    <citation type="submission" date="2008-02" db="EMBL/GenBank/DDBJ databases">
        <title>Complete sequence of Pseudomonas putida W619.</title>
        <authorList>
            <person name="Copeland A."/>
            <person name="Lucas S."/>
            <person name="Lapidus A."/>
            <person name="Barry K."/>
            <person name="Detter J.C."/>
            <person name="Glavina del Rio T."/>
            <person name="Dalin E."/>
            <person name="Tice H."/>
            <person name="Pitluck S."/>
            <person name="Chain P."/>
            <person name="Malfatti S."/>
            <person name="Shin M."/>
            <person name="Vergez L."/>
            <person name="Schmutz J."/>
            <person name="Larimer F."/>
            <person name="Land M."/>
            <person name="Hauser L."/>
            <person name="Kyrpides N."/>
            <person name="Kim E."/>
            <person name="Taghavi S."/>
            <person name="Vangronsveld D."/>
            <person name="van der Lelie D."/>
            <person name="Richardson P."/>
        </authorList>
    </citation>
    <scope>NUCLEOTIDE SEQUENCE [LARGE SCALE GENOMIC DNA]</scope>
    <source>
        <strain>W619</strain>
    </source>
</reference>
<accession>B1JDH6</accession>
<comment type="function">
    <text evidence="1">Catalyzes the synthesis of GMP from XMP.</text>
</comment>
<comment type="catalytic activity">
    <reaction evidence="1">
        <text>XMP + L-glutamine + ATP + H2O = GMP + L-glutamate + AMP + diphosphate + 2 H(+)</text>
        <dbReference type="Rhea" id="RHEA:11680"/>
        <dbReference type="ChEBI" id="CHEBI:15377"/>
        <dbReference type="ChEBI" id="CHEBI:15378"/>
        <dbReference type="ChEBI" id="CHEBI:29985"/>
        <dbReference type="ChEBI" id="CHEBI:30616"/>
        <dbReference type="ChEBI" id="CHEBI:33019"/>
        <dbReference type="ChEBI" id="CHEBI:57464"/>
        <dbReference type="ChEBI" id="CHEBI:58115"/>
        <dbReference type="ChEBI" id="CHEBI:58359"/>
        <dbReference type="ChEBI" id="CHEBI:456215"/>
        <dbReference type="EC" id="6.3.5.2"/>
    </reaction>
</comment>
<comment type="pathway">
    <text evidence="1">Purine metabolism; GMP biosynthesis; GMP from XMP (L-Gln route): step 1/1.</text>
</comment>
<comment type="subunit">
    <text evidence="1">Homodimer.</text>
</comment>
<keyword id="KW-0067">ATP-binding</keyword>
<keyword id="KW-0315">Glutamine amidotransferase</keyword>
<keyword id="KW-0332">GMP biosynthesis</keyword>
<keyword id="KW-0436">Ligase</keyword>
<keyword id="KW-0547">Nucleotide-binding</keyword>
<keyword id="KW-0658">Purine biosynthesis</keyword>